<comment type="function">
    <text evidence="1">Component of the cytochrome b6-f complex, which mediates electron transfer between photosystem II (PSII) and photosystem I (PSI), cyclic electron flow around PSI, and state transitions.</text>
</comment>
<comment type="cofactor">
    <cofactor evidence="1">
        <name>heme b</name>
        <dbReference type="ChEBI" id="CHEBI:60344"/>
    </cofactor>
    <text evidence="1">Binds 2 heme b groups non-covalently with two histidine residues as axial ligands.</text>
</comment>
<comment type="cofactor">
    <cofactor evidence="1">
        <name>heme c</name>
        <dbReference type="ChEBI" id="CHEBI:61717"/>
    </cofactor>
    <text evidence="1">Binds one heme group covalently by a single cysteine link with no axial amino acid ligand. This heme was named heme ci.</text>
</comment>
<comment type="subunit">
    <text evidence="1">The 4 large subunits of the cytochrome b6-f complex are cytochrome b6, subunit IV (17 kDa polypeptide, PetD), cytochrome f and the Rieske protein, while the 4 small subunits are PetG, PetL, PetM and PetN. The complex functions as a dimer.</text>
</comment>
<comment type="subcellular location">
    <subcellularLocation>
        <location evidence="1">Cellular thylakoid membrane</location>
        <topology evidence="1">Multi-pass membrane protein</topology>
    </subcellularLocation>
</comment>
<comment type="miscellaneous">
    <text evidence="1">Heme 1 (or BH or b566) is high-potential and absorbs at about 566 nm, and heme 2 (or BL or b562) is low-potential and absorbs at about 562 nm.</text>
</comment>
<comment type="similarity">
    <text evidence="1">Belongs to the cytochrome b family. PetB subfamily.</text>
</comment>
<keyword id="KW-0249">Electron transport</keyword>
<keyword id="KW-0349">Heme</keyword>
<keyword id="KW-0408">Iron</keyword>
<keyword id="KW-0472">Membrane</keyword>
<keyword id="KW-0479">Metal-binding</keyword>
<keyword id="KW-0602">Photosynthesis</keyword>
<keyword id="KW-1185">Reference proteome</keyword>
<keyword id="KW-0793">Thylakoid</keyword>
<keyword id="KW-0812">Transmembrane</keyword>
<keyword id="KW-1133">Transmembrane helix</keyword>
<keyword id="KW-0813">Transport</keyword>
<protein>
    <recommendedName>
        <fullName evidence="1">Cytochrome b6</fullName>
    </recommendedName>
</protein>
<sequence length="218" mass="24607">MANSSPVYDWFNERLEIQDIVDDISSKYVPPHVNIFYCLGGITLVCFLIQFATGFAMTFYYKPTVVEAYSSVQYLMTDVSFGWLIRSVHRWSASMMVLMLILHVFRVYLTGGFKRPRELTWVTGVTMAVITVSFGVTGYSLPWDQVGYWAVKIVSGVPAAVPVVGDFMVELLRGGESVGQSTLTRFYSLHTFVLPWLLAVFMLAHFLMIRKQGISGPL</sequence>
<organism>
    <name type="scientific">Synechococcus sp. (strain RCC307)</name>
    <dbReference type="NCBI Taxonomy" id="316278"/>
    <lineage>
        <taxon>Bacteria</taxon>
        <taxon>Bacillati</taxon>
        <taxon>Cyanobacteriota</taxon>
        <taxon>Cyanophyceae</taxon>
        <taxon>Synechococcales</taxon>
        <taxon>Synechococcaceae</taxon>
        <taxon>Synechococcus</taxon>
    </lineage>
</organism>
<reference key="1">
    <citation type="submission" date="2006-05" db="EMBL/GenBank/DDBJ databases">
        <authorList>
            <consortium name="Genoscope"/>
        </authorList>
    </citation>
    <scope>NUCLEOTIDE SEQUENCE [LARGE SCALE GENOMIC DNA]</scope>
    <source>
        <strain>RCC307</strain>
    </source>
</reference>
<feature type="chain" id="PRO_1000061417" description="Cytochrome b6">
    <location>
        <begin position="1"/>
        <end position="218"/>
    </location>
</feature>
<feature type="transmembrane region" description="Helical" evidence="1">
    <location>
        <begin position="35"/>
        <end position="55"/>
    </location>
</feature>
<feature type="transmembrane region" description="Helical" evidence="1">
    <location>
        <begin position="93"/>
        <end position="113"/>
    </location>
</feature>
<feature type="transmembrane region" description="Helical" evidence="1">
    <location>
        <begin position="119"/>
        <end position="139"/>
    </location>
</feature>
<feature type="transmembrane region" description="Helical" evidence="1">
    <location>
        <begin position="189"/>
        <end position="209"/>
    </location>
</feature>
<feature type="binding site" description="covalent" evidence="1">
    <location>
        <position position="38"/>
    </location>
    <ligand>
        <name>heme c</name>
        <dbReference type="ChEBI" id="CHEBI:61717"/>
    </ligand>
</feature>
<feature type="binding site" description="axial binding residue" evidence="1">
    <location>
        <position position="89"/>
    </location>
    <ligand>
        <name>heme b</name>
        <dbReference type="ChEBI" id="CHEBI:60344"/>
        <label>2</label>
    </ligand>
    <ligandPart>
        <name>Fe</name>
        <dbReference type="ChEBI" id="CHEBI:18248"/>
    </ligandPart>
</feature>
<feature type="binding site" description="axial binding residue" evidence="1">
    <location>
        <position position="103"/>
    </location>
    <ligand>
        <name>heme b</name>
        <dbReference type="ChEBI" id="CHEBI:60344"/>
        <label>1</label>
    </ligand>
    <ligandPart>
        <name>Fe</name>
        <dbReference type="ChEBI" id="CHEBI:18248"/>
    </ligandPart>
</feature>
<feature type="binding site" description="axial binding residue" evidence="1">
    <location>
        <position position="190"/>
    </location>
    <ligand>
        <name>heme b</name>
        <dbReference type="ChEBI" id="CHEBI:60344"/>
        <label>2</label>
    </ligand>
    <ligandPart>
        <name>Fe</name>
        <dbReference type="ChEBI" id="CHEBI:18248"/>
    </ligandPart>
</feature>
<feature type="binding site" description="axial binding residue" evidence="1">
    <location>
        <position position="205"/>
    </location>
    <ligand>
        <name>heme b</name>
        <dbReference type="ChEBI" id="CHEBI:60344"/>
        <label>1</label>
    </ligand>
    <ligandPart>
        <name>Fe</name>
        <dbReference type="ChEBI" id="CHEBI:18248"/>
    </ligandPart>
</feature>
<accession>A5GR39</accession>
<proteinExistence type="inferred from homology"/>
<gene>
    <name evidence="1" type="primary">petB</name>
    <name type="ordered locus">SynRCC307_0445</name>
</gene>
<evidence type="ECO:0000255" key="1">
    <source>
        <dbReference type="HAMAP-Rule" id="MF_00633"/>
    </source>
</evidence>
<dbReference type="EMBL" id="CT978603">
    <property type="protein sequence ID" value="CAK27348.1"/>
    <property type="molecule type" value="Genomic_DNA"/>
</dbReference>
<dbReference type="SMR" id="A5GR39"/>
<dbReference type="STRING" id="316278.SynRCC307_0445"/>
<dbReference type="KEGG" id="syr:SynRCC307_0445"/>
<dbReference type="eggNOG" id="COG1290">
    <property type="taxonomic scope" value="Bacteria"/>
</dbReference>
<dbReference type="HOGENOM" id="CLU_031114_0_2_3"/>
<dbReference type="OrthoDB" id="9804503at2"/>
<dbReference type="Proteomes" id="UP000001115">
    <property type="component" value="Chromosome"/>
</dbReference>
<dbReference type="GO" id="GO:0031676">
    <property type="term" value="C:plasma membrane-derived thylakoid membrane"/>
    <property type="evidence" value="ECO:0007669"/>
    <property type="project" value="UniProtKB-SubCell"/>
</dbReference>
<dbReference type="GO" id="GO:0045158">
    <property type="term" value="F:electron transporter, transferring electrons within cytochrome b6/f complex of photosystem II activity"/>
    <property type="evidence" value="ECO:0007669"/>
    <property type="project" value="UniProtKB-UniRule"/>
</dbReference>
<dbReference type="GO" id="GO:0046872">
    <property type="term" value="F:metal ion binding"/>
    <property type="evidence" value="ECO:0007669"/>
    <property type="project" value="UniProtKB-KW"/>
</dbReference>
<dbReference type="GO" id="GO:0016491">
    <property type="term" value="F:oxidoreductase activity"/>
    <property type="evidence" value="ECO:0007669"/>
    <property type="project" value="InterPro"/>
</dbReference>
<dbReference type="GO" id="GO:0015979">
    <property type="term" value="P:photosynthesis"/>
    <property type="evidence" value="ECO:0007669"/>
    <property type="project" value="UniProtKB-UniRule"/>
</dbReference>
<dbReference type="GO" id="GO:0022904">
    <property type="term" value="P:respiratory electron transport chain"/>
    <property type="evidence" value="ECO:0007669"/>
    <property type="project" value="InterPro"/>
</dbReference>
<dbReference type="CDD" id="cd00284">
    <property type="entry name" value="Cytochrome_b_N"/>
    <property type="match status" value="1"/>
</dbReference>
<dbReference type="Gene3D" id="1.20.810.10">
    <property type="entry name" value="Cytochrome Bc1 Complex, Chain C"/>
    <property type="match status" value="1"/>
</dbReference>
<dbReference type="HAMAP" id="MF_00633">
    <property type="entry name" value="Cytb6_f_cytb6"/>
    <property type="match status" value="1"/>
</dbReference>
<dbReference type="InterPro" id="IPR005797">
    <property type="entry name" value="Cyt_b/b6_N"/>
</dbReference>
<dbReference type="InterPro" id="IPR023530">
    <property type="entry name" value="Cyt_B6_PetB"/>
</dbReference>
<dbReference type="InterPro" id="IPR027387">
    <property type="entry name" value="Cytb/b6-like_sf"/>
</dbReference>
<dbReference type="InterPro" id="IPR048259">
    <property type="entry name" value="Cytochrome_b_N_euk/bac"/>
</dbReference>
<dbReference type="InterPro" id="IPR016174">
    <property type="entry name" value="Di-haem_cyt_TM"/>
</dbReference>
<dbReference type="NCBIfam" id="NF002990">
    <property type="entry name" value="PRK03735.1"/>
    <property type="match status" value="1"/>
</dbReference>
<dbReference type="PANTHER" id="PTHR19271">
    <property type="entry name" value="CYTOCHROME B"/>
    <property type="match status" value="1"/>
</dbReference>
<dbReference type="PANTHER" id="PTHR19271:SF16">
    <property type="entry name" value="CYTOCHROME B"/>
    <property type="match status" value="1"/>
</dbReference>
<dbReference type="Pfam" id="PF00033">
    <property type="entry name" value="Cytochrome_B"/>
    <property type="match status" value="1"/>
</dbReference>
<dbReference type="PIRSF" id="PIRSF000032">
    <property type="entry name" value="Cytochrome_b6"/>
    <property type="match status" value="1"/>
</dbReference>
<dbReference type="SUPFAM" id="SSF81342">
    <property type="entry name" value="Transmembrane di-heme cytochromes"/>
    <property type="match status" value="1"/>
</dbReference>
<dbReference type="PROSITE" id="PS51002">
    <property type="entry name" value="CYTB_NTER"/>
    <property type="match status" value="1"/>
</dbReference>
<name>CYB6_SYNR3</name>